<organism>
    <name type="scientific">Homo sapiens</name>
    <name type="common">Human</name>
    <dbReference type="NCBI Taxonomy" id="9606"/>
    <lineage>
        <taxon>Eukaryota</taxon>
        <taxon>Metazoa</taxon>
        <taxon>Chordata</taxon>
        <taxon>Craniata</taxon>
        <taxon>Vertebrata</taxon>
        <taxon>Euteleostomi</taxon>
        <taxon>Mammalia</taxon>
        <taxon>Eutheria</taxon>
        <taxon>Euarchontoglires</taxon>
        <taxon>Primates</taxon>
        <taxon>Haplorrhini</taxon>
        <taxon>Catarrhini</taxon>
        <taxon>Hominidae</taxon>
        <taxon>Homo</taxon>
    </lineage>
</organism>
<gene>
    <name type="primary">ASPN</name>
    <name type="synonym">PLAP1</name>
    <name type="synonym">SLRR1C</name>
    <name type="ORF">UNQ215/PRO241</name>
</gene>
<evidence type="ECO:0000250" key="1"/>
<evidence type="ECO:0000255" key="2"/>
<evidence type="ECO:0000256" key="3">
    <source>
        <dbReference type="SAM" id="MobiDB-lite"/>
    </source>
</evidence>
<evidence type="ECO:0000269" key="4">
    <source>
    </source>
</evidence>
<evidence type="ECO:0000269" key="5">
    <source>
    </source>
</evidence>
<evidence type="ECO:0000269" key="6">
    <source>
    </source>
</evidence>
<evidence type="ECO:0000269" key="7">
    <source>
    </source>
</evidence>
<evidence type="ECO:0000269" key="8">
    <source>
    </source>
</evidence>
<evidence type="ECO:0000305" key="9"/>
<evidence type="ECO:0000305" key="10">
    <source>
    </source>
</evidence>
<proteinExistence type="evidence at protein level"/>
<accession>Q9BXN1</accession>
<accession>Q5TBF3</accession>
<accession>Q96K79</accession>
<accession>Q96LD0</accession>
<accession>Q9NXP3</accession>
<comment type="function">
    <text evidence="1 5 8">Negatively regulates periodontal ligament (PDL) differentiation and mineralization to ensure that the PDL is not ossified and to maintain homeostasis of the tooth-supporting system. Inhibits BMP2-induced cytodifferentiation of PDL cells by preventing its binding to BMPR1B/BMP type-1B receptor, resulting in inhibition of BMP-dependent activation of SMAD proteins (By similarity). Critical regulator of TGF-beta in articular cartilage and plays an essential role in cartilage homeostasis and osteoarthritis (OA) pathogenesis. Negatively regulates chondrogenesis in the articular cartilage by blocking the TGF-beta/receptor interaction on the cell surface and inhibiting the canonical TGF-beta/Smad signal. Binds calcium and plays a role in osteoblast-driven collagen biomineralization activity.</text>
</comment>
<comment type="subunit">
    <text evidence="1 8">Interacts with TGFB1, TGFB2 and TGFB3. DCN, BGN, and FMOD inhibit binding to TGFB1. Interacts with BMP2. Interacts in vitro with type II collagen (By similarity). Interacts with type I collagen. DCN can inhibit collagen binding.</text>
</comment>
<comment type="subcellular location">
    <subcellularLocation>
        <location evidence="5">Secreted</location>
        <location evidence="5">Extracellular space</location>
        <location evidence="5">Extracellular matrix</location>
    </subcellularLocation>
</comment>
<comment type="tissue specificity">
    <text evidence="5">Higher levels in osteoarthritic articular cartilage, aorta, uterus. Moderate expression in small intestine, heart, liver, bladder, ovary, stomach, and in the adrenal, thyroid, and mammary glands. Low expression in trachea, bone marrow, and lung. Colocalizes with TGFB1 in chondrocytes within osteoarthritic (OA) lesions of articular cartilage.</text>
</comment>
<comment type="induction">
    <text evidence="5">By TGFB1.</text>
</comment>
<comment type="domain">
    <text evidence="1 8">The LRR 5 repeat can inhibit BMP2-induced cytodifferentiation and may be involved in the interaction with BMP2 (By similarity). The repeats LRR 10, LRR 11 and LRR 12 are involved in binding type I collagen. The poly-Asp region is involved in binding calcium.</text>
</comment>
<comment type="PTM">
    <text>There is no serine/glycine dipeptide sequence expected for the attachment of O-linked glycosaminoglycans and this is probably not a proteoglycan. The O-linked polysaccharide on 54-Ser is probably the mucin type linked to GalNAc.</text>
</comment>
<comment type="PTM">
    <text evidence="4 7">The N-linked glycan at Asn-282 is composed of variable structures of GlcNAc, mannose, fucose, HexNAc and hexose.</text>
</comment>
<comment type="polymorphism">
    <text evidence="4">The poly-Asp region of ASPN is polymorphic and ranges at least from 11 to 17 Asp (PubMed:11152692).</text>
</comment>
<comment type="disease">
    <disease id="DI-02643">
        <name>Osteoarthritis 3</name>
        <acronym>OS3</acronym>
        <description>A degenerative disease of the joints characterized by degradation of the hyaline articular cartilage and remodeling of the subchondral bone with sclerosis. Clinical symptoms include pain and joint stiffness often leading to significant disability and joint replacement.</description>
        <dbReference type="MIM" id="607850"/>
    </disease>
    <text>Disease susceptibility is associated with variants affecting the gene represented in this entry. Susceptibility to osteoarthritis is conferred by a triplet repeat expansion polymorphism. ASPN allele having 14 aspartic acid repeats in the N-terminal region of the protein (D14), is overrepresented relative to the common allele having 13 aspartic acid repeats (D13). The frequency of the D14 allele increases with disease severity. The D14 allele is also overrepresented in individuals with hip osteoarthritis.</text>
</comment>
<comment type="disease" evidence="6">
    <disease id="DI-01829">
        <name>Intervertebral disc disease</name>
        <acronym>IDD</acronym>
        <description>A common musculo-skeletal disorder caused by degeneration of intervertebral disks of the lumbar spine. It results in low-back pain and unilateral leg pain.</description>
        <dbReference type="MIM" id="603932"/>
    </disease>
    <text evidence="6">Disease susceptibility is associated with variants affecting the gene represented in this entry. Susceptibility to intervertebral disk disease, particularly lumbar disk degeneration, is conferred by a triplet repeat expansion polymorphism. ASPN allele having 14 aspartic acid repeats in the N-terminal region of the protein (D14), is associated with the disorder in some populations (PubMed:18304494).</text>
</comment>
<comment type="similarity">
    <text evidence="9">Belongs to the small leucine-rich proteoglycan (SLRP) family. SLRP class I subfamily.</text>
</comment>
<comment type="sequence caution" evidence="9">
    <conflict type="erroneous initiation">
        <sequence resource="EMBL-CDS" id="BAA90967"/>
    </conflict>
    <text>Truncated N-terminus.</text>
</comment>
<sequence>MKEYVLLLFLALCSAKPFFSPSHIALKNMMLKDMEDTDDDDDDDDDDDDDDEDNSLFPTREPRSHFFPFDLFPMCPFGCQCYSRVVHCSDLGLTSVPTNIPFDTRMLDLQNNKIKEIKENDFKGLTSLYGLILNNNKLTKIHPKAFLTTKKLRRLYLSHNQLSEIPLNLPKSLAELRIHENKVKKIQKDTFKGMNALHVLEMSANPLDNNGIEPGAFEGVTVFHIRIAEAKLTSVPKGLPPTLLELHLDYNKISTVELEDFKRYKELQRLGLGNNKITDIENGSLANIPRVREIHLENNKLKKIPSGLPELKYLQIIFLHSNSIARVGVNDFCPTVPKMKKSLYSAISLFNNPVKYWEMQPATFRCVLSRMSVQLGNFGM</sequence>
<reference key="1">
    <citation type="journal article" date="2001" name="J. Biol. Chem.">
        <title>Identification and characterization of asporin. A novel member of the leucine-rich repeat protein family closely related to decorin and biglycan.</title>
        <authorList>
            <person name="Lorenzo P."/>
            <person name="Aspberg A."/>
            <person name="Oennerfjord P."/>
            <person name="Bayliss M.T."/>
            <person name="Neame P.J."/>
            <person name="Heinegaard D."/>
        </authorList>
    </citation>
    <scope>NUCLEOTIDE SEQUENCE [MRNA]</scope>
    <scope>PARTIAL PROTEIN SEQUENCE</scope>
    <scope>GLYCOSYLATION AT SER-55 AND ASN-282</scope>
    <scope>IDENTIFICATION BY MASS SPECTROMETRY</scope>
    <scope>POLYMORPHISM OF POLY-ASP REGION</scope>
    <source>
        <tissue>Cartilage</tissue>
    </source>
</reference>
<reference key="2">
    <citation type="journal article" date="2001" name="Gene">
        <title>Expression profile of active genes in human periodontal ligament and isolation of PLAP-1, a novel SLRP family gene.</title>
        <authorList>
            <person name="Yamada S."/>
            <person name="Murakami S."/>
            <person name="Matoba R."/>
            <person name="Ozawa Y."/>
            <person name="Yokokoji T."/>
            <person name="Nakahira Y."/>
            <person name="Ikezawa K."/>
            <person name="Takayama S."/>
            <person name="Matsubara K."/>
            <person name="Okada H."/>
        </authorList>
    </citation>
    <scope>NUCLEOTIDE SEQUENCE [MRNA]</scope>
</reference>
<reference key="3">
    <citation type="journal article" date="2004" name="Nat. Genet.">
        <title>Complete sequencing and characterization of 21,243 full-length human cDNAs.</title>
        <authorList>
            <person name="Ota T."/>
            <person name="Suzuki Y."/>
            <person name="Nishikawa T."/>
            <person name="Otsuki T."/>
            <person name="Sugiyama T."/>
            <person name="Irie R."/>
            <person name="Wakamatsu A."/>
            <person name="Hayashi K."/>
            <person name="Sato H."/>
            <person name="Nagai K."/>
            <person name="Kimura K."/>
            <person name="Makita H."/>
            <person name="Sekine M."/>
            <person name="Obayashi M."/>
            <person name="Nishi T."/>
            <person name="Shibahara T."/>
            <person name="Tanaka T."/>
            <person name="Ishii S."/>
            <person name="Yamamoto J."/>
            <person name="Saito K."/>
            <person name="Kawai Y."/>
            <person name="Isono Y."/>
            <person name="Nakamura Y."/>
            <person name="Nagahari K."/>
            <person name="Murakami K."/>
            <person name="Yasuda T."/>
            <person name="Iwayanagi T."/>
            <person name="Wagatsuma M."/>
            <person name="Shiratori A."/>
            <person name="Sudo H."/>
            <person name="Hosoiri T."/>
            <person name="Kaku Y."/>
            <person name="Kodaira H."/>
            <person name="Kondo H."/>
            <person name="Sugawara M."/>
            <person name="Takahashi M."/>
            <person name="Kanda K."/>
            <person name="Yokoi T."/>
            <person name="Furuya T."/>
            <person name="Kikkawa E."/>
            <person name="Omura Y."/>
            <person name="Abe K."/>
            <person name="Kamihara K."/>
            <person name="Katsuta N."/>
            <person name="Sato K."/>
            <person name="Tanikawa M."/>
            <person name="Yamazaki M."/>
            <person name="Ninomiya K."/>
            <person name="Ishibashi T."/>
            <person name="Yamashita H."/>
            <person name="Murakawa K."/>
            <person name="Fujimori K."/>
            <person name="Tanai H."/>
            <person name="Kimata M."/>
            <person name="Watanabe M."/>
            <person name="Hiraoka S."/>
            <person name="Chiba Y."/>
            <person name="Ishida S."/>
            <person name="Ono Y."/>
            <person name="Takiguchi S."/>
            <person name="Watanabe S."/>
            <person name="Yosida M."/>
            <person name="Hotuta T."/>
            <person name="Kusano J."/>
            <person name="Kanehori K."/>
            <person name="Takahashi-Fujii A."/>
            <person name="Hara H."/>
            <person name="Tanase T.-O."/>
            <person name="Nomura Y."/>
            <person name="Togiya S."/>
            <person name="Komai F."/>
            <person name="Hara R."/>
            <person name="Takeuchi K."/>
            <person name="Arita M."/>
            <person name="Imose N."/>
            <person name="Musashino K."/>
            <person name="Yuuki H."/>
            <person name="Oshima A."/>
            <person name="Sasaki N."/>
            <person name="Aotsuka S."/>
            <person name="Yoshikawa Y."/>
            <person name="Matsunawa H."/>
            <person name="Ichihara T."/>
            <person name="Shiohata N."/>
            <person name="Sano S."/>
            <person name="Moriya S."/>
            <person name="Momiyama H."/>
            <person name="Satoh N."/>
            <person name="Takami S."/>
            <person name="Terashima Y."/>
            <person name="Suzuki O."/>
            <person name="Nakagawa S."/>
            <person name="Senoh A."/>
            <person name="Mizoguchi H."/>
            <person name="Goto Y."/>
            <person name="Shimizu F."/>
            <person name="Wakebe H."/>
            <person name="Hishigaki H."/>
            <person name="Watanabe T."/>
            <person name="Sugiyama A."/>
            <person name="Takemoto M."/>
            <person name="Kawakami B."/>
            <person name="Yamazaki M."/>
            <person name="Watanabe K."/>
            <person name="Kumagai A."/>
            <person name="Itakura S."/>
            <person name="Fukuzumi Y."/>
            <person name="Fujimori Y."/>
            <person name="Komiyama M."/>
            <person name="Tashiro H."/>
            <person name="Tanigami A."/>
            <person name="Fujiwara T."/>
            <person name="Ono T."/>
            <person name="Yamada K."/>
            <person name="Fujii Y."/>
            <person name="Ozaki K."/>
            <person name="Hirao M."/>
            <person name="Ohmori Y."/>
            <person name="Kawabata A."/>
            <person name="Hikiji T."/>
            <person name="Kobatake N."/>
            <person name="Inagaki H."/>
            <person name="Ikema Y."/>
            <person name="Okamoto S."/>
            <person name="Okitani R."/>
            <person name="Kawakami T."/>
            <person name="Noguchi S."/>
            <person name="Itoh T."/>
            <person name="Shigeta K."/>
            <person name="Senba T."/>
            <person name="Matsumura K."/>
            <person name="Nakajima Y."/>
            <person name="Mizuno T."/>
            <person name="Morinaga M."/>
            <person name="Sasaki M."/>
            <person name="Togashi T."/>
            <person name="Oyama M."/>
            <person name="Hata H."/>
            <person name="Watanabe M."/>
            <person name="Komatsu T."/>
            <person name="Mizushima-Sugano J."/>
            <person name="Satoh T."/>
            <person name="Shirai Y."/>
            <person name="Takahashi Y."/>
            <person name="Nakagawa K."/>
            <person name="Okumura K."/>
            <person name="Nagase T."/>
            <person name="Nomura N."/>
            <person name="Kikuchi H."/>
            <person name="Masuho Y."/>
            <person name="Yamashita R."/>
            <person name="Nakai K."/>
            <person name="Yada T."/>
            <person name="Nakamura Y."/>
            <person name="Ohara O."/>
            <person name="Isogai T."/>
            <person name="Sugano S."/>
        </authorList>
    </citation>
    <scope>NUCLEOTIDE SEQUENCE [LARGE SCALE MRNA]</scope>
    <source>
        <tissue>Colon</tissue>
        <tissue>Embryo</tissue>
    </source>
</reference>
<reference key="4">
    <citation type="journal article" date="2003" name="Genome Res.">
        <title>The secreted protein discovery initiative (SPDI), a large-scale effort to identify novel human secreted and transmembrane proteins: a bioinformatics assessment.</title>
        <authorList>
            <person name="Clark H.F."/>
            <person name="Gurney A.L."/>
            <person name="Abaya E."/>
            <person name="Baker K."/>
            <person name="Baldwin D.T."/>
            <person name="Brush J."/>
            <person name="Chen J."/>
            <person name="Chow B."/>
            <person name="Chui C."/>
            <person name="Crowley C."/>
            <person name="Currell B."/>
            <person name="Deuel B."/>
            <person name="Dowd P."/>
            <person name="Eaton D."/>
            <person name="Foster J.S."/>
            <person name="Grimaldi C."/>
            <person name="Gu Q."/>
            <person name="Hass P.E."/>
            <person name="Heldens S."/>
            <person name="Huang A."/>
            <person name="Kim H.S."/>
            <person name="Klimowski L."/>
            <person name="Jin Y."/>
            <person name="Johnson S."/>
            <person name="Lee J."/>
            <person name="Lewis L."/>
            <person name="Liao D."/>
            <person name="Mark M.R."/>
            <person name="Robbie E."/>
            <person name="Sanchez C."/>
            <person name="Schoenfeld J."/>
            <person name="Seshagiri S."/>
            <person name="Simmons L."/>
            <person name="Singh J."/>
            <person name="Smith V."/>
            <person name="Stinson J."/>
            <person name="Vagts A."/>
            <person name="Vandlen R.L."/>
            <person name="Watanabe C."/>
            <person name="Wieand D."/>
            <person name="Woods K."/>
            <person name="Xie M.-H."/>
            <person name="Yansura D.G."/>
            <person name="Yi S."/>
            <person name="Yu G."/>
            <person name="Yuan J."/>
            <person name="Zhang M."/>
            <person name="Zhang Z."/>
            <person name="Goddard A.D."/>
            <person name="Wood W.I."/>
            <person name="Godowski P.J."/>
            <person name="Gray A.M."/>
        </authorList>
    </citation>
    <scope>NUCLEOTIDE SEQUENCE [LARGE SCALE MRNA]</scope>
</reference>
<reference key="5">
    <citation type="journal article" date="2004" name="Nature">
        <title>DNA sequence and analysis of human chromosome 9.</title>
        <authorList>
            <person name="Humphray S.J."/>
            <person name="Oliver K."/>
            <person name="Hunt A.R."/>
            <person name="Plumb R.W."/>
            <person name="Loveland J.E."/>
            <person name="Howe K.L."/>
            <person name="Andrews T.D."/>
            <person name="Searle S."/>
            <person name="Hunt S.E."/>
            <person name="Scott C.E."/>
            <person name="Jones M.C."/>
            <person name="Ainscough R."/>
            <person name="Almeida J.P."/>
            <person name="Ambrose K.D."/>
            <person name="Ashwell R.I.S."/>
            <person name="Babbage A.K."/>
            <person name="Babbage S."/>
            <person name="Bagguley C.L."/>
            <person name="Bailey J."/>
            <person name="Banerjee R."/>
            <person name="Barker D.J."/>
            <person name="Barlow K.F."/>
            <person name="Bates K."/>
            <person name="Beasley H."/>
            <person name="Beasley O."/>
            <person name="Bird C.P."/>
            <person name="Bray-Allen S."/>
            <person name="Brown A.J."/>
            <person name="Brown J.Y."/>
            <person name="Burford D."/>
            <person name="Burrill W."/>
            <person name="Burton J."/>
            <person name="Carder C."/>
            <person name="Carter N.P."/>
            <person name="Chapman J.C."/>
            <person name="Chen Y."/>
            <person name="Clarke G."/>
            <person name="Clark S.Y."/>
            <person name="Clee C.M."/>
            <person name="Clegg S."/>
            <person name="Collier R.E."/>
            <person name="Corby N."/>
            <person name="Crosier M."/>
            <person name="Cummings A.T."/>
            <person name="Davies J."/>
            <person name="Dhami P."/>
            <person name="Dunn M."/>
            <person name="Dutta I."/>
            <person name="Dyer L.W."/>
            <person name="Earthrowl M.E."/>
            <person name="Faulkner L."/>
            <person name="Fleming C.J."/>
            <person name="Frankish A."/>
            <person name="Frankland J.A."/>
            <person name="French L."/>
            <person name="Fricker D.G."/>
            <person name="Garner P."/>
            <person name="Garnett J."/>
            <person name="Ghori J."/>
            <person name="Gilbert J.G.R."/>
            <person name="Glison C."/>
            <person name="Grafham D.V."/>
            <person name="Gribble S."/>
            <person name="Griffiths C."/>
            <person name="Griffiths-Jones S."/>
            <person name="Grocock R."/>
            <person name="Guy J."/>
            <person name="Hall R.E."/>
            <person name="Hammond S."/>
            <person name="Harley J.L."/>
            <person name="Harrison E.S.I."/>
            <person name="Hart E.A."/>
            <person name="Heath P.D."/>
            <person name="Henderson C.D."/>
            <person name="Hopkins B.L."/>
            <person name="Howard P.J."/>
            <person name="Howden P.J."/>
            <person name="Huckle E."/>
            <person name="Johnson C."/>
            <person name="Johnson D."/>
            <person name="Joy A.A."/>
            <person name="Kay M."/>
            <person name="Keenan S."/>
            <person name="Kershaw J.K."/>
            <person name="Kimberley A.M."/>
            <person name="King A."/>
            <person name="Knights A."/>
            <person name="Laird G.K."/>
            <person name="Langford C."/>
            <person name="Lawlor S."/>
            <person name="Leongamornlert D.A."/>
            <person name="Leversha M."/>
            <person name="Lloyd C."/>
            <person name="Lloyd D.M."/>
            <person name="Lovell J."/>
            <person name="Martin S."/>
            <person name="Mashreghi-Mohammadi M."/>
            <person name="Matthews L."/>
            <person name="McLaren S."/>
            <person name="McLay K.E."/>
            <person name="McMurray A."/>
            <person name="Milne S."/>
            <person name="Nickerson T."/>
            <person name="Nisbett J."/>
            <person name="Nordsiek G."/>
            <person name="Pearce A.V."/>
            <person name="Peck A.I."/>
            <person name="Porter K.M."/>
            <person name="Pandian R."/>
            <person name="Pelan S."/>
            <person name="Phillimore B."/>
            <person name="Povey S."/>
            <person name="Ramsey Y."/>
            <person name="Rand V."/>
            <person name="Scharfe M."/>
            <person name="Sehra H.K."/>
            <person name="Shownkeen R."/>
            <person name="Sims S.K."/>
            <person name="Skuce C.D."/>
            <person name="Smith M."/>
            <person name="Steward C.A."/>
            <person name="Swarbreck D."/>
            <person name="Sycamore N."/>
            <person name="Tester J."/>
            <person name="Thorpe A."/>
            <person name="Tracey A."/>
            <person name="Tromans A."/>
            <person name="Thomas D.W."/>
            <person name="Wall M."/>
            <person name="Wallis J.M."/>
            <person name="West A.P."/>
            <person name="Whitehead S.L."/>
            <person name="Willey D.L."/>
            <person name="Williams S.A."/>
            <person name="Wilming L."/>
            <person name="Wray P.W."/>
            <person name="Young L."/>
            <person name="Ashurst J.L."/>
            <person name="Coulson A."/>
            <person name="Blocker H."/>
            <person name="Durbin R.M."/>
            <person name="Sulston J.E."/>
            <person name="Hubbard T."/>
            <person name="Jackson M.J."/>
            <person name="Bentley D.R."/>
            <person name="Beck S."/>
            <person name="Rogers J."/>
            <person name="Dunham I."/>
        </authorList>
    </citation>
    <scope>NUCLEOTIDE SEQUENCE [LARGE SCALE GENOMIC DNA]</scope>
</reference>
<reference key="6">
    <citation type="submission" date="2005-07" db="EMBL/GenBank/DDBJ databases">
        <authorList>
            <person name="Mural R.J."/>
            <person name="Istrail S."/>
            <person name="Sutton G.G."/>
            <person name="Florea L."/>
            <person name="Halpern A.L."/>
            <person name="Mobarry C.M."/>
            <person name="Lippert R."/>
            <person name="Walenz B."/>
            <person name="Shatkay H."/>
            <person name="Dew I."/>
            <person name="Miller J.R."/>
            <person name="Flanigan M.J."/>
            <person name="Edwards N.J."/>
            <person name="Bolanos R."/>
            <person name="Fasulo D."/>
            <person name="Halldorsson B.V."/>
            <person name="Hannenhalli S."/>
            <person name="Turner R."/>
            <person name="Yooseph S."/>
            <person name="Lu F."/>
            <person name="Nusskern D.R."/>
            <person name="Shue B.C."/>
            <person name="Zheng X.H."/>
            <person name="Zhong F."/>
            <person name="Delcher A.L."/>
            <person name="Huson D.H."/>
            <person name="Kravitz S.A."/>
            <person name="Mouchard L."/>
            <person name="Reinert K."/>
            <person name="Remington K.A."/>
            <person name="Clark A.G."/>
            <person name="Waterman M.S."/>
            <person name="Eichler E.E."/>
            <person name="Adams M.D."/>
            <person name="Hunkapiller M.W."/>
            <person name="Myers E.W."/>
            <person name="Venter J.C."/>
        </authorList>
    </citation>
    <scope>NUCLEOTIDE SEQUENCE [LARGE SCALE GENOMIC DNA]</scope>
</reference>
<reference key="7">
    <citation type="journal article" date="2001" name="J. Biol. Chem.">
        <title>Expression pattern and gene characterization of asporin. A newly discovered member of the leucine-rich repeat protein family.</title>
        <authorList>
            <person name="Henry S.P."/>
            <person name="Takanosu M."/>
            <person name="Boyd T.C."/>
            <person name="Mayne P.M."/>
            <person name="Eberspaecher H."/>
            <person name="Zhou W."/>
            <person name="de Crombrugghe B."/>
            <person name="Hoeoek M."/>
            <person name="Mayne R."/>
        </authorList>
    </citation>
    <scope>PARTIAL NUCLEOTIDE SEQUENCE [MRNA]</scope>
    <source>
        <tissue>Heart</tissue>
    </source>
</reference>
<reference key="8">
    <citation type="journal article" date="2005" name="Nat. Genet.">
        <title>An aspartic acid repeat polymorphism in asporin inhibits chondrogenesis and increases susceptibility to osteoarthritis.</title>
        <authorList>
            <person name="Kizawa H."/>
            <person name="Kou I."/>
            <person name="Iida A."/>
            <person name="Sudo A."/>
            <person name="Miyamoto Y."/>
            <person name="Fukuda A."/>
            <person name="Mabuchi A."/>
            <person name="Kotani A."/>
            <person name="Kawakami A."/>
            <person name="Yamamoto S."/>
            <person name="Uchida A."/>
            <person name="Nakamura K."/>
            <person name="Notoya K."/>
            <person name="Nakamura Y."/>
            <person name="Ikegawa S."/>
        </authorList>
    </citation>
    <scope>ASSOCIATION WITH OS3</scope>
</reference>
<reference key="9">
    <citation type="journal article" date="2007" name="J. Biol. Chem.">
        <title>Mechanisms for asporin function and regulation in articular cartilage.</title>
        <authorList>
            <person name="Nakajima M."/>
            <person name="Kizawa H."/>
            <person name="Saitoh M."/>
            <person name="Kou I."/>
            <person name="Miyazono K."/>
            <person name="Ikegawa S."/>
        </authorList>
    </citation>
    <scope>FUNCTION</scope>
    <scope>SUBCELLULAR LOCATION</scope>
    <scope>INDUCTION BY TGFB1</scope>
    <scope>TISSUE SPECIFICITY</scope>
</reference>
<reference key="10">
    <citation type="journal article" date="2008" name="Am. J. Hum. Genet.">
        <title>Association of the asporin D14 allele with lumbar-disc degeneration in Asians.</title>
        <authorList>
            <person name="Song Y.Q."/>
            <person name="Cheung K.M."/>
            <person name="Ho D.W."/>
            <person name="Poon S.C."/>
            <person name="Chiba K."/>
            <person name="Kawaguchi Y."/>
            <person name="Hirose Y."/>
            <person name="Alini M."/>
            <person name="Grad S."/>
            <person name="Yee A.F."/>
            <person name="Leong J.C."/>
            <person name="Luk K.D."/>
            <person name="Yip S.P."/>
            <person name="Karppinen J."/>
            <person name="Cheah K.S."/>
            <person name="Sham P."/>
            <person name="Ikegawa S."/>
            <person name="Chan D."/>
        </authorList>
    </citation>
    <scope>INVOLVEMENT IN SUSCEPTIBILITY TO IDD</scope>
</reference>
<reference key="11">
    <citation type="journal article" date="2009" name="Biochem. J.">
        <title>Asporin competes with decorin for collagen binding, binds calcium and promotes osteoblast collagen mineralization.</title>
        <authorList>
            <person name="Kalamajski S."/>
            <person name="Aspberg A."/>
            <person name="Lindblom K."/>
            <person name="Heinegaard D."/>
            <person name="Oldberg A."/>
        </authorList>
    </citation>
    <scope>FUNCTION</scope>
    <scope>IDENTIFICATION BY MASS SPECTROMETRY</scope>
    <scope>INTERACTION WITH TYPE I COLLAGEN</scope>
    <scope>DISULFIDE BOND</scope>
    <scope>DOMAIN</scope>
</reference>
<reference key="12">
    <citation type="journal article" date="2009" name="J. Proteome Res.">
        <title>Glycoproteomics analysis of human liver tissue by combination of multiple enzyme digestion and hydrazide chemistry.</title>
        <authorList>
            <person name="Chen R."/>
            <person name="Jiang X."/>
            <person name="Sun D."/>
            <person name="Han G."/>
            <person name="Wang F."/>
            <person name="Ye M."/>
            <person name="Wang L."/>
            <person name="Zou H."/>
        </authorList>
    </citation>
    <scope>GLYCOSYLATION [LARGE SCALE ANALYSIS] AT ASN-282</scope>
    <source>
        <tissue>Liver</tissue>
    </source>
</reference>
<protein>
    <recommendedName>
        <fullName>Asporin</fullName>
    </recommendedName>
    <alternativeName>
        <fullName>Periodontal ligament-associated protein 1</fullName>
        <shortName>PLAP-1</shortName>
    </alternativeName>
</protein>
<name>ASPN_HUMAN</name>
<feature type="signal peptide" evidence="2">
    <location>
        <begin position="1"/>
        <end position="14"/>
    </location>
</feature>
<feature type="propeptide" id="PRO_0000032727" evidence="2">
    <location>
        <begin position="15"/>
        <end position="32"/>
    </location>
</feature>
<feature type="chain" id="PRO_0000032728" description="Asporin">
    <location>
        <begin position="33"/>
        <end position="380"/>
    </location>
</feature>
<feature type="domain" description="LRRNT">
    <location>
        <begin position="66"/>
        <end position="102"/>
    </location>
</feature>
<feature type="repeat" description="LRR 1">
    <location>
        <begin position="103"/>
        <end position="124"/>
    </location>
</feature>
<feature type="repeat" description="LRR 2">
    <location>
        <begin position="127"/>
        <end position="148"/>
    </location>
</feature>
<feature type="repeat" description="LRR 3">
    <location>
        <begin position="151"/>
        <end position="173"/>
    </location>
</feature>
<feature type="repeat" description="LRR 4">
    <location>
        <begin position="174"/>
        <end position="193"/>
    </location>
</feature>
<feature type="repeat" description="LRR 5">
    <location>
        <begin position="196"/>
        <end position="219"/>
    </location>
</feature>
<feature type="repeat" description="LRR 6">
    <location>
        <begin position="242"/>
        <end position="263"/>
    </location>
</feature>
<feature type="repeat" description="LRR 7">
    <location>
        <begin position="266"/>
        <end position="287"/>
    </location>
</feature>
<feature type="repeat" description="LRR 8">
    <location>
        <begin position="290"/>
        <end position="312"/>
    </location>
</feature>
<feature type="repeat" description="LRR 9">
    <location>
        <begin position="313"/>
        <end position="334"/>
    </location>
</feature>
<feature type="repeat" description="LRR 10">
    <location>
        <begin position="335"/>
        <end position="357"/>
    </location>
</feature>
<feature type="repeat" description="LRR 11">
    <location>
        <begin position="358"/>
        <end position="380"/>
    </location>
</feature>
<feature type="region of interest" description="Disordered" evidence="3">
    <location>
        <begin position="35"/>
        <end position="59"/>
    </location>
</feature>
<feature type="region of interest" description="Interaction with TGFB1" evidence="1">
    <location>
        <begin position="166"/>
        <end position="212"/>
    </location>
</feature>
<feature type="compositionally biased region" description="Acidic residues" evidence="3">
    <location>
        <begin position="35"/>
        <end position="54"/>
    </location>
</feature>
<feature type="glycosylation site" description="O-linked (GalNAc...) serine" evidence="10">
    <location>
        <position position="55"/>
    </location>
</feature>
<feature type="glycosylation site" description="N-linked (GlcNAc...) asparagine" evidence="4 7">
    <location>
        <position position="282"/>
    </location>
</feature>
<feature type="disulfide bond" evidence="8">
    <location>
        <begin position="75"/>
        <end position="81"/>
    </location>
</feature>
<feature type="disulfide bond" evidence="8">
    <location>
        <begin position="79"/>
        <end position="88"/>
    </location>
</feature>
<feature type="disulfide bond" evidence="8">
    <location>
        <begin position="333"/>
        <end position="366"/>
    </location>
</feature>
<feature type="sequence conflict" description="In Ref. 3; BAB55060." evidence="9" ref="3">
    <original>GLPPTL</original>
    <variation>DNLPSF</variation>
    <location>
        <begin position="238"/>
        <end position="243"/>
    </location>
</feature>
<keyword id="KW-0091">Biomineralization</keyword>
<keyword id="KW-0106">Calcium</keyword>
<keyword id="KW-0903">Direct protein sequencing</keyword>
<keyword id="KW-1015">Disulfide bond</keyword>
<keyword id="KW-0272">Extracellular matrix</keyword>
<keyword id="KW-0325">Glycoprotein</keyword>
<keyword id="KW-0433">Leucine-rich repeat</keyword>
<keyword id="KW-1267">Proteomics identification</keyword>
<keyword id="KW-1185">Reference proteome</keyword>
<keyword id="KW-0677">Repeat</keyword>
<keyword id="KW-0964">Secreted</keyword>
<keyword id="KW-0732">Signal</keyword>
<keyword id="KW-0818">Triplet repeat expansion</keyword>
<dbReference type="EMBL" id="AF316824">
    <property type="protein sequence ID" value="AAK35161.1"/>
    <property type="molecule type" value="mRNA"/>
</dbReference>
<dbReference type="EMBL" id="AY029191">
    <property type="protein sequence ID" value="AAK31800.1"/>
    <property type="molecule type" value="mRNA"/>
</dbReference>
<dbReference type="EMBL" id="AK000136">
    <property type="protein sequence ID" value="BAA90967.1"/>
    <property type="status" value="ALT_INIT"/>
    <property type="molecule type" value="mRNA"/>
</dbReference>
<dbReference type="EMBL" id="AK027359">
    <property type="protein sequence ID" value="BAB55060.1"/>
    <property type="molecule type" value="mRNA"/>
</dbReference>
<dbReference type="EMBL" id="AY358329">
    <property type="protein sequence ID" value="AAQ88695.1"/>
    <property type="molecule type" value="mRNA"/>
</dbReference>
<dbReference type="EMBL" id="AL137848">
    <property type="status" value="NOT_ANNOTATED_CDS"/>
    <property type="molecule type" value="Genomic_DNA"/>
</dbReference>
<dbReference type="EMBL" id="CH471089">
    <property type="protein sequence ID" value="EAW62822.1"/>
    <property type="molecule type" value="Genomic_DNA"/>
</dbReference>
<dbReference type="RefSeq" id="NP_001180264.1">
    <property type="nucleotide sequence ID" value="NM_001193335.1"/>
</dbReference>
<dbReference type="RefSeq" id="NP_060150.4">
    <property type="nucleotide sequence ID" value="NM_017680.4"/>
</dbReference>
<dbReference type="SMR" id="Q9BXN1"/>
<dbReference type="BioGRID" id="120183">
    <property type="interactions" value="7"/>
</dbReference>
<dbReference type="FunCoup" id="Q9BXN1">
    <property type="interactions" value="57"/>
</dbReference>
<dbReference type="IntAct" id="Q9BXN1">
    <property type="interactions" value="2"/>
</dbReference>
<dbReference type="STRING" id="9606.ENSP00000364694"/>
<dbReference type="GlyConnect" id="1019">
    <property type="glycosylation" value="46 N-Linked glycans (1 site)"/>
</dbReference>
<dbReference type="GlyCosmos" id="Q9BXN1">
    <property type="glycosylation" value="3 sites, 45 glycans"/>
</dbReference>
<dbReference type="GlyGen" id="Q9BXN1">
    <property type="glycosylation" value="5 sites, 121 N-linked glycans (1 site), 2 O-linked glycans (2 sites)"/>
</dbReference>
<dbReference type="iPTMnet" id="Q9BXN1"/>
<dbReference type="PhosphoSitePlus" id="Q9BXN1"/>
<dbReference type="BioMuta" id="ASPN"/>
<dbReference type="DMDM" id="209572589"/>
<dbReference type="jPOST" id="Q9BXN1"/>
<dbReference type="MassIVE" id="Q9BXN1"/>
<dbReference type="PaxDb" id="9606-ENSP00000364694"/>
<dbReference type="PeptideAtlas" id="Q9BXN1"/>
<dbReference type="ProteomicsDB" id="79461"/>
<dbReference type="Antibodypedia" id="2015">
    <property type="antibodies" value="204 antibodies from 27 providers"/>
</dbReference>
<dbReference type="DNASU" id="54829"/>
<dbReference type="Ensembl" id="ENST00000375544.7">
    <property type="protein sequence ID" value="ENSP00000364694.3"/>
    <property type="gene ID" value="ENSG00000106819.13"/>
</dbReference>
<dbReference type="GeneID" id="54829"/>
<dbReference type="KEGG" id="hsa:54829"/>
<dbReference type="UCSC" id="uc004ase.3">
    <property type="organism name" value="human"/>
</dbReference>
<dbReference type="AGR" id="HGNC:14872"/>
<dbReference type="CTD" id="54829"/>
<dbReference type="DisGeNET" id="54829"/>
<dbReference type="GeneCards" id="ASPN"/>
<dbReference type="HGNC" id="HGNC:14872">
    <property type="gene designation" value="ASPN"/>
</dbReference>
<dbReference type="HPA" id="ENSG00000106819">
    <property type="expression patterns" value="Tissue enhanced (heart muscle, smooth muscle)"/>
</dbReference>
<dbReference type="MalaCards" id="ASPN"/>
<dbReference type="MIM" id="603932">
    <property type="type" value="phenotype"/>
</dbReference>
<dbReference type="MIM" id="607850">
    <property type="type" value="phenotype"/>
</dbReference>
<dbReference type="MIM" id="608135">
    <property type="type" value="gene"/>
</dbReference>
<dbReference type="neXtProt" id="NX_Q9BXN1"/>
<dbReference type="OpenTargets" id="ENSG00000106819"/>
<dbReference type="PharmGKB" id="PA25057"/>
<dbReference type="VEuPathDB" id="HostDB:ENSG00000106819"/>
<dbReference type="eggNOG" id="KOG0619">
    <property type="taxonomic scope" value="Eukaryota"/>
</dbReference>
<dbReference type="GeneTree" id="ENSGT00940000157444"/>
<dbReference type="HOGENOM" id="CLU_000288_186_0_1"/>
<dbReference type="InParanoid" id="Q9BXN1"/>
<dbReference type="OMA" id="INDFCPT"/>
<dbReference type="OrthoDB" id="1111193at2759"/>
<dbReference type="PAN-GO" id="Q9BXN1">
    <property type="GO annotations" value="1 GO annotation based on evolutionary models"/>
</dbReference>
<dbReference type="PhylomeDB" id="Q9BXN1"/>
<dbReference type="TreeFam" id="TF334562"/>
<dbReference type="PathwayCommons" id="Q9BXN1"/>
<dbReference type="Reactome" id="R-HSA-3000178">
    <property type="pathway name" value="ECM proteoglycans"/>
</dbReference>
<dbReference type="BioGRID-ORCS" id="54829">
    <property type="hits" value="2 hits in 289 CRISPR screens"/>
</dbReference>
<dbReference type="ChiTaRS" id="ASPN">
    <property type="organism name" value="human"/>
</dbReference>
<dbReference type="GeneWiki" id="Asporin"/>
<dbReference type="GenomeRNAi" id="54829"/>
<dbReference type="Pharos" id="Q9BXN1">
    <property type="development level" value="Tbio"/>
</dbReference>
<dbReference type="PRO" id="PR:Q9BXN1"/>
<dbReference type="Proteomes" id="UP000005640">
    <property type="component" value="Chromosome 9"/>
</dbReference>
<dbReference type="RNAct" id="Q9BXN1">
    <property type="molecule type" value="protein"/>
</dbReference>
<dbReference type="Bgee" id="ENSG00000106819">
    <property type="expression patterns" value="Expressed in tendon of biceps brachii and 181 other cell types or tissues"/>
</dbReference>
<dbReference type="ExpressionAtlas" id="Q9BXN1">
    <property type="expression patterns" value="baseline and differential"/>
</dbReference>
<dbReference type="GO" id="GO:0042995">
    <property type="term" value="C:cell projection"/>
    <property type="evidence" value="ECO:0007669"/>
    <property type="project" value="Ensembl"/>
</dbReference>
<dbReference type="GO" id="GO:0062023">
    <property type="term" value="C:collagen-containing extracellular matrix"/>
    <property type="evidence" value="ECO:0007005"/>
    <property type="project" value="BHF-UCL"/>
</dbReference>
<dbReference type="GO" id="GO:0031012">
    <property type="term" value="C:extracellular matrix"/>
    <property type="evidence" value="ECO:0000314"/>
    <property type="project" value="UniProtKB"/>
</dbReference>
<dbReference type="GO" id="GO:0005615">
    <property type="term" value="C:extracellular space"/>
    <property type="evidence" value="ECO:0000318"/>
    <property type="project" value="GO_Central"/>
</dbReference>
<dbReference type="GO" id="GO:0005509">
    <property type="term" value="F:calcium ion binding"/>
    <property type="evidence" value="ECO:0000314"/>
    <property type="project" value="UniProtKB"/>
</dbReference>
<dbReference type="GO" id="GO:0030282">
    <property type="term" value="P:bone mineralization"/>
    <property type="evidence" value="ECO:0000314"/>
    <property type="project" value="UniProtKB"/>
</dbReference>
<dbReference type="GO" id="GO:0070171">
    <property type="term" value="P:negative regulation of tooth mineralization"/>
    <property type="evidence" value="ECO:0000250"/>
    <property type="project" value="UniProtKB"/>
</dbReference>
<dbReference type="GO" id="GO:0030512">
    <property type="term" value="P:negative regulation of transforming growth factor beta receptor signaling pathway"/>
    <property type="evidence" value="ECO:0000314"/>
    <property type="project" value="UniProtKB"/>
</dbReference>
<dbReference type="GO" id="GO:1902617">
    <property type="term" value="P:response to fluoride"/>
    <property type="evidence" value="ECO:0007669"/>
    <property type="project" value="Ensembl"/>
</dbReference>
<dbReference type="FunFam" id="3.80.10.10:FF:000038">
    <property type="entry name" value="Biglycan"/>
    <property type="match status" value="1"/>
</dbReference>
<dbReference type="Gene3D" id="3.80.10.10">
    <property type="entry name" value="Ribonuclease Inhibitor"/>
    <property type="match status" value="1"/>
</dbReference>
<dbReference type="InterPro" id="IPR001611">
    <property type="entry name" value="Leu-rich_rpt"/>
</dbReference>
<dbReference type="InterPro" id="IPR003591">
    <property type="entry name" value="Leu-rich_rpt_typical-subtyp"/>
</dbReference>
<dbReference type="InterPro" id="IPR032675">
    <property type="entry name" value="LRR_dom_sf"/>
</dbReference>
<dbReference type="InterPro" id="IPR000372">
    <property type="entry name" value="LRRNT"/>
</dbReference>
<dbReference type="InterPro" id="IPR050333">
    <property type="entry name" value="SLRP"/>
</dbReference>
<dbReference type="InterPro" id="IPR016352">
    <property type="entry name" value="SLRP_I_decor/aspor/byglycan"/>
</dbReference>
<dbReference type="PANTHER" id="PTHR45712">
    <property type="entry name" value="AGAP008170-PA"/>
    <property type="match status" value="1"/>
</dbReference>
<dbReference type="PANTHER" id="PTHR45712:SF2">
    <property type="entry name" value="ASPORIN"/>
    <property type="match status" value="1"/>
</dbReference>
<dbReference type="Pfam" id="PF13855">
    <property type="entry name" value="LRR_8"/>
    <property type="match status" value="2"/>
</dbReference>
<dbReference type="Pfam" id="PF01462">
    <property type="entry name" value="LRRNT"/>
    <property type="match status" value="1"/>
</dbReference>
<dbReference type="PIRSF" id="PIRSF002490">
    <property type="entry name" value="SLRP_I"/>
    <property type="match status" value="1"/>
</dbReference>
<dbReference type="SMART" id="SM00369">
    <property type="entry name" value="LRR_TYP"/>
    <property type="match status" value="7"/>
</dbReference>
<dbReference type="SMART" id="SM00013">
    <property type="entry name" value="LRRNT"/>
    <property type="match status" value="1"/>
</dbReference>
<dbReference type="SUPFAM" id="SSF52058">
    <property type="entry name" value="L domain-like"/>
    <property type="match status" value="1"/>
</dbReference>
<dbReference type="PROSITE" id="PS51450">
    <property type="entry name" value="LRR"/>
    <property type="match status" value="7"/>
</dbReference>